<gene>
    <name type="ordered locus">MAP_2833c</name>
</gene>
<organism>
    <name type="scientific">Mycolicibacterium paratuberculosis (strain ATCC BAA-968 / K-10)</name>
    <name type="common">Mycobacterium paratuberculosis</name>
    <dbReference type="NCBI Taxonomy" id="262316"/>
    <lineage>
        <taxon>Bacteria</taxon>
        <taxon>Bacillati</taxon>
        <taxon>Actinomycetota</taxon>
        <taxon>Actinomycetes</taxon>
        <taxon>Mycobacteriales</taxon>
        <taxon>Mycobacteriaceae</taxon>
        <taxon>Mycobacterium</taxon>
        <taxon>Mycobacterium avium complex (MAC)</taxon>
    </lineage>
</organism>
<evidence type="ECO:0000255" key="1">
    <source>
        <dbReference type="HAMAP-Rule" id="MF_01297"/>
    </source>
</evidence>
<name>NB1_MYCPA</name>
<keyword id="KW-0349">Heme</keyword>
<keyword id="KW-0408">Iron</keyword>
<keyword id="KW-0413">Isomerase</keyword>
<keyword id="KW-0479">Metal-binding</keyword>
<keyword id="KW-1185">Reference proteome</keyword>
<reference key="1">
    <citation type="journal article" date="2005" name="Proc. Natl. Acad. Sci. U.S.A.">
        <title>The complete genome sequence of Mycobacterium avium subspecies paratuberculosis.</title>
        <authorList>
            <person name="Li L."/>
            <person name="Bannantine J.P."/>
            <person name="Zhang Q."/>
            <person name="Amonsin A."/>
            <person name="May B.J."/>
            <person name="Alt D."/>
            <person name="Banerji N."/>
            <person name="Kanjilal S."/>
            <person name="Kapur V."/>
        </authorList>
    </citation>
    <scope>NUCLEOTIDE SEQUENCE [LARGE SCALE GENOMIC DNA]</scope>
    <source>
        <strain>ATCC BAA-968 / K-10</strain>
    </source>
</reference>
<comment type="function">
    <text evidence="1">Heme-binding protein able to scavenge peroxynitrite and to protect free L-tyrosine against peroxynitrite-mediated nitration, by acting as a peroxynitrite isomerase that converts peroxynitrite to nitrate. Therefore, this protein likely plays a role in peroxynitrite sensing and in the detoxification of reactive nitrogen and oxygen species (RNS and ROS, respectively). Is able to bind nitric oxide (NO) in vitro, but may act as a sensor of peroxynitrite levels in vivo.</text>
</comment>
<comment type="catalytic activity">
    <reaction evidence="1">
        <text>peroxynitrite = nitrate</text>
        <dbReference type="Rhea" id="RHEA:63116"/>
        <dbReference type="ChEBI" id="CHEBI:17632"/>
        <dbReference type="ChEBI" id="CHEBI:25941"/>
    </reaction>
    <physiologicalReaction direction="left-to-right" evidence="1">
        <dbReference type="Rhea" id="RHEA:63117"/>
    </physiologicalReaction>
</comment>
<comment type="cofactor">
    <cofactor evidence="1">
        <name>heme b</name>
        <dbReference type="ChEBI" id="CHEBI:60344"/>
    </cofactor>
    <text evidence="1">Binds 1 heme b group per subunit, that coordinates a highly solvent-exposed Fe(III) atom.</text>
</comment>
<comment type="pathway">
    <text evidence="1">Nitrogen metabolism.</text>
</comment>
<comment type="subunit">
    <text evidence="1">Homodimer.</text>
</comment>
<comment type="domain">
    <text evidence="1">Forms a 10-stranded antiparallel beta-barrel structure able to accommodate a hydrophobic ligand in its interior. In fact, this fold hosts the heme group, which is located in a wide surface cleft.</text>
</comment>
<comment type="similarity">
    <text evidence="1">Belongs to the nitrobindin family.</text>
</comment>
<sequence length="161" mass="17422">MPTDLHPDLAALAPLLGTWTGRGSGKYPTIQPFDYLEEVTFSHVGKPFLAYAQKTRAAADGKPLHAETGYLRVPQPGRLELVLAHPSGITEIEVGSYAVTGGLIEMRMSTTSIGLTPSAKEVTALARWFRIDGDELSYSVQMGAVGQPLQDHLAAVLHRQR</sequence>
<proteinExistence type="inferred from homology"/>
<accession>Q73W27</accession>
<feature type="chain" id="PRO_0000356924" description="Peroxynitrite isomerase 1">
    <location>
        <begin position="1"/>
        <end position="161"/>
    </location>
</feature>
<feature type="short sequence motif" description="GXWXGXG" evidence="1">
    <location>
        <begin position="17"/>
        <end position="23"/>
    </location>
</feature>
<feature type="binding site" description="axial binding residue" evidence="1">
    <location>
        <position position="152"/>
    </location>
    <ligand>
        <name>heme b</name>
        <dbReference type="ChEBI" id="CHEBI:60344"/>
    </ligand>
    <ligandPart>
        <name>Fe</name>
        <dbReference type="ChEBI" id="CHEBI:18248"/>
    </ligandPart>
</feature>
<dbReference type="EC" id="5.99.-.-" evidence="1"/>
<dbReference type="EMBL" id="AE016958">
    <property type="protein sequence ID" value="AAS05150.1"/>
    <property type="molecule type" value="Genomic_DNA"/>
</dbReference>
<dbReference type="RefSeq" id="WP_003875226.1">
    <property type="nucleotide sequence ID" value="NZ_CP106873.1"/>
</dbReference>
<dbReference type="SMR" id="Q73W27"/>
<dbReference type="STRING" id="262316.MAP_2833c"/>
<dbReference type="KEGG" id="mpa:MAP_2833c"/>
<dbReference type="PATRIC" id="fig|262316.17.peg.3000"/>
<dbReference type="eggNOG" id="COG4044">
    <property type="taxonomic scope" value="Bacteria"/>
</dbReference>
<dbReference type="HOGENOM" id="CLU_085483_1_0_11"/>
<dbReference type="Proteomes" id="UP000000580">
    <property type="component" value="Chromosome"/>
</dbReference>
<dbReference type="GO" id="GO:0020037">
    <property type="term" value="F:heme binding"/>
    <property type="evidence" value="ECO:0007669"/>
    <property type="project" value="UniProtKB-UniRule"/>
</dbReference>
<dbReference type="GO" id="GO:0046872">
    <property type="term" value="F:metal ion binding"/>
    <property type="evidence" value="ECO:0007669"/>
    <property type="project" value="UniProtKB-KW"/>
</dbReference>
<dbReference type="GO" id="GO:0062213">
    <property type="term" value="F:peroxynitrite isomerase activity"/>
    <property type="evidence" value="ECO:0007669"/>
    <property type="project" value="UniProtKB-UniRule"/>
</dbReference>
<dbReference type="CDD" id="cd07828">
    <property type="entry name" value="lipocalin_heme-bd-THAP4-like"/>
    <property type="match status" value="1"/>
</dbReference>
<dbReference type="Gene3D" id="2.40.128.20">
    <property type="match status" value="1"/>
</dbReference>
<dbReference type="HAMAP" id="MF_01297">
    <property type="entry name" value="nitrobindin"/>
    <property type="match status" value="1"/>
</dbReference>
<dbReference type="InterPro" id="IPR012674">
    <property type="entry name" value="Calycin"/>
</dbReference>
<dbReference type="InterPro" id="IPR022939">
    <property type="entry name" value="Nb(III)_bact/plant"/>
</dbReference>
<dbReference type="InterPro" id="IPR045165">
    <property type="entry name" value="Nitrobindin"/>
</dbReference>
<dbReference type="InterPro" id="IPR054873">
    <property type="entry name" value="PeroxynitIsom"/>
</dbReference>
<dbReference type="InterPro" id="IPR014878">
    <property type="entry name" value="THAP4-like_heme-bd"/>
</dbReference>
<dbReference type="NCBIfam" id="NF045819">
    <property type="entry name" value="PeroxynitIsom"/>
    <property type="match status" value="1"/>
</dbReference>
<dbReference type="PANTHER" id="PTHR15854:SF4">
    <property type="entry name" value="PEROXYNITRITE ISOMERASE THAP4"/>
    <property type="match status" value="1"/>
</dbReference>
<dbReference type="PANTHER" id="PTHR15854">
    <property type="entry name" value="THAP4 PROTEIN"/>
    <property type="match status" value="1"/>
</dbReference>
<dbReference type="Pfam" id="PF08768">
    <property type="entry name" value="THAP4_heme-bd"/>
    <property type="match status" value="1"/>
</dbReference>
<dbReference type="SUPFAM" id="SSF50814">
    <property type="entry name" value="Lipocalins"/>
    <property type="match status" value="1"/>
</dbReference>
<protein>
    <recommendedName>
        <fullName>Peroxynitrite isomerase 1</fullName>
        <ecNumber evidence="1">5.99.-.-</ecNumber>
    </recommendedName>
    <alternativeName>
        <fullName>Ferric nitrobindin</fullName>
        <shortName>Nb(III)</shortName>
    </alternativeName>
</protein>